<sequence length="529" mass="57928">MSTNENANLPAARLNRFKNKGKDSTEMRRRRIEVNVELRKAKKDEQMLKRRNVSSFPDDATSPLQENRNNQGTVNWSVEDIVKGINSNNLESQLQATQAARKLLSREKQPPIDNIIRAGLIPKFVSFLGKTDCSPIQFESAWALTNIASGTSEQTKAVVDGGAIPAFISLLASPHAHISEQAVWALGNIAGDGSAFRDLVIKHGAIDPLLALLAVPDLSTLACGYLRNLTWTLSNLCRNKNPAPPLDAVEQILPTLVRLLHHNDPEVLADSCWAISYLTDGPNERIEMVVKKGVVPQLVKLLGATELPIVTPALRAIGNIVTGTDEQTQKVIDAGALAVFPSLLTNPKTNIQKEATWTMSNITAGRQDQIQQVVNHGLVPFLVGVLSKADFKTQKEAAWAITNYTSGGTVEQIVYLVHCGIIEPLMNLLSAKDTKIIQVILDAISNIFQAAEKLGETEKLSIMIEECGGLDKIEALQRHENESVYKASLNLIEKYFSVEEEEDQNVVPETTSEGFAFQVQDGAPGTFNF</sequence>
<name>IMA1_MOUSE</name>
<protein>
    <recommendedName>
        <fullName evidence="10">Importin subunit alpha-1</fullName>
    </recommendedName>
    <alternativeName>
        <fullName>Importin alpha P1</fullName>
    </alternativeName>
    <alternativeName>
        <fullName>Karyopherin subunit alpha-2</fullName>
    </alternativeName>
    <alternativeName>
        <fullName>Pendulin</fullName>
    </alternativeName>
    <alternativeName>
        <fullName>Pore targeting complex 58 kDa subunit</fullName>
        <shortName>PTAC58</shortName>
    </alternativeName>
    <alternativeName>
        <fullName>RAG cohort protein 1</fullName>
    </alternativeName>
    <alternativeName>
        <fullName>SRP1-alpha</fullName>
    </alternativeName>
</protein>
<gene>
    <name evidence="11" type="primary">Kpna2</name>
    <name type="synonym">Rch1</name>
</gene>
<comment type="function">
    <text evidence="1 8">Functions in nuclear protein import as an adapter protein for nuclear receptor KPNB1 (PubMed:21690087). Binds specifically and directly to substrates containing either a simple or bipartite NLS motif (PubMed:21690087). Docking of the importin/substrate complex to the nuclear pore complex (NPC) is mediated by KPNB1 through binding to nucleoporin FxFG repeats and the complex is subsequently translocated through the pore by an energy requiring, Ran-dependent mechanism. At the nucleoplasmic side of the NPC, Ran binds to importin-beta and the three components separate and importin-alpha and -beta are re-exported from the nucleus to the cytoplasm where GTP hydrolysis releases Ran from importin. The directionality of nuclear import is thought to be conferred by an asymmetric distribution of the GTP- and GDP-bound forms of Ran between the cytoplasm and nucleus (By similarity). Mediator of PR-DUB complex component BAP1 nuclear import; acts redundantly with KPNA1 and Transportin-1/TNPO1 (By similarity).</text>
</comment>
<comment type="subunit">
    <text evidence="1 5 7 9">Heterodimer; with KPNB1 (By similarity). Component of a complex containing CSE1L, RAN and KPNA2 (By similarity). Interacts directly with CSE1L (By similarity). Interacts with PLAG1 (By similarity). Interacts with APEX1 (via N-terminus) (By similarity). Interacts with FRG1 (via N-terminus) (By similarity). Interacts with ARL4A, CTNNBL1 and NBN (By similarity). Interacts with ANP32E (PubMed:10692581). Interacts with SNAI1 (via zinc fingers) (PubMed:21454664). Interacts with SNAI2 (via zinc fingers) (By similarity). Interacts with BAG6 (By similarity). Interacts with AIFM2; this interaction likely mediates the translocation of AIFM2 into the nucleus upon oxidative stress. Interacts with RSL1D1 (By similarity). Interacts with BAP1 (via C-terminus); the interaction contributes to BAP1 nuclear localization (By similarity). Interacts with PLSCR4; this interaction mediates the nucleus import of PLSCR4 (By similarity).</text>
</comment>
<comment type="interaction">
    <interactant intactId="EBI-3043908">
        <id>P52293</id>
    </interactant>
    <interactant intactId="EBI-7892102">
        <id>P01580</id>
        <label>Ifng</label>
    </interactant>
    <organismsDiffer>false</organismsDiffer>
    <experiments>5</experiments>
</comment>
<comment type="interaction">
    <interactant intactId="EBI-3043908">
        <id>P52293</id>
    </interactant>
    <interactant intactId="EBI-7730807">
        <id>Q9BYF1</id>
        <label>ACE2</label>
    </interactant>
    <organismsDiffer>true</organismsDiffer>
    <experiments>4</experiments>
</comment>
<comment type="interaction">
    <interactant intactId="EBI-3043908">
        <id>P52293</id>
    </interactant>
    <interactant intactId="EBI-9821342">
        <id>B4LTG5</id>
        <label>Dvir\dUTPase</label>
    </interactant>
    <organismsDiffer>true</organismsDiffer>
    <experiments>6</experiments>
</comment>
<comment type="interaction">
    <interactant intactId="EBI-3043908">
        <id>P52293</id>
    </interactant>
    <interactant intactId="EBI-6051231">
        <id>P31345</id>
        <label>PB2</label>
    </interactant>
    <organismsDiffer>true</organismsDiffer>
    <experiments>3</experiments>
</comment>
<comment type="interaction">
    <interactant intactId="EBI-3043908">
        <id>P52293</id>
    </interactant>
    <interactant intactId="EBI-752230">
        <id>P29034</id>
        <label>S100A2</label>
    </interactant>
    <organismsDiffer>true</organismsDiffer>
    <experiments>2</experiments>
</comment>
<comment type="interaction">
    <interactant intactId="EBI-3043908">
        <id>P52293</id>
    </interactant>
    <interactant intactId="EBI-744603">
        <id>Q15637</id>
        <label>SF1</label>
    </interactant>
    <organismsDiffer>true</organismsDiffer>
    <experiments>3</experiments>
</comment>
<comment type="interaction">
    <interactant intactId="EBI-3043908">
        <id>P52293</id>
    </interactant>
    <interactant intactId="EBI-8469003">
        <id>Q3SYU7</id>
        <label>TNPO1</label>
    </interactant>
    <organismsDiffer>true</organismsDiffer>
    <experiments>3</experiments>
</comment>
<comment type="interaction">
    <interactant intactId="EBI-3043908">
        <id>P52293</id>
    </interactant>
    <interactant intactId="EBI-617698">
        <id>P03070</id>
    </interactant>
    <organismsDiffer>true</organismsDiffer>
    <experiments>3</experiments>
</comment>
<comment type="subcellular location">
    <subcellularLocation>
        <location evidence="1">Cytoplasm</location>
    </subcellularLocation>
    <subcellularLocation>
        <location evidence="1">Nucleus</location>
    </subcellularLocation>
</comment>
<comment type="tissue specificity">
    <text>Slightly detected in brain but not in cerebellum and skeletal muscle, highly expressed in testis and spleen.</text>
</comment>
<comment type="domain">
    <text evidence="4 6">Consists of an N-terminal hydrophilic region, a hydrophobic central region composed of 10 repeats, and a short hydrophilic C-terminus. The N-terminal hydrophilic region contains the importin beta binding domain (IBB domain), which is sufficient for binding importin beta and essential for nuclear protein import.</text>
</comment>
<comment type="domain">
    <text evidence="4 6">The IBB domain is thought to act as an intrasteric autoregulatory sequence by interacting with the internal autoinhibitory NLS. Binding of KPNB1 probably overlaps the internal NLS and contributes to a high affinity for cytoplasmic NLS-containing cargo substrates. After dissociation of the importin/substrate complex in the nucleus the internal autohibitory NLS contributes to a low affinity for nuclear NLS-containing proteins.</text>
</comment>
<comment type="domain">
    <text evidence="4 6">The major and minor NLS binding sites are mainly involved in recognition of simple or bipartite NLS motifs. Structurally located within in a helical surface groove they contain several conserved Trp and Asn residues of the corresponding third helices (H3) of ARM repeats which mainly contribute to binding.</text>
</comment>
<comment type="PTM">
    <text evidence="1">Ubiquitinated. Deubiquitinated by USP22; leading to stabilization and increased activity.</text>
</comment>
<comment type="similarity">
    <text evidence="10">Belongs to the importin alpha family.</text>
</comment>
<evidence type="ECO:0000250" key="1">
    <source>
        <dbReference type="UniProtKB" id="P52292"/>
    </source>
</evidence>
<evidence type="ECO:0000255" key="2">
    <source>
        <dbReference type="PROSITE-ProRule" id="PRU00561"/>
    </source>
</evidence>
<evidence type="ECO:0000256" key="3">
    <source>
        <dbReference type="SAM" id="MobiDB-lite"/>
    </source>
</evidence>
<evidence type="ECO:0000269" key="4">
    <source>
    </source>
</evidence>
<evidence type="ECO:0000269" key="5">
    <source>
    </source>
</evidence>
<evidence type="ECO:0000269" key="6">
    <source>
    </source>
</evidence>
<evidence type="ECO:0000269" key="7">
    <source>
    </source>
</evidence>
<evidence type="ECO:0000269" key="8">
    <source>
    </source>
</evidence>
<evidence type="ECO:0000269" key="9">
    <source>
    </source>
</evidence>
<evidence type="ECO:0000305" key="10"/>
<evidence type="ECO:0000312" key="11">
    <source>
        <dbReference type="MGI" id="MGI:103561"/>
    </source>
</evidence>
<evidence type="ECO:0007744" key="12">
    <source>
        <dbReference type="PDB" id="3Q5U"/>
    </source>
</evidence>
<evidence type="ECO:0007744" key="13">
    <source>
    </source>
</evidence>
<evidence type="ECO:0007829" key="14">
    <source>
        <dbReference type="PDB" id="1Q1S"/>
    </source>
</evidence>
<evidence type="ECO:0007829" key="15">
    <source>
        <dbReference type="PDB" id="2YNR"/>
    </source>
</evidence>
<evidence type="ECO:0007829" key="16">
    <source>
        <dbReference type="PDB" id="3TPO"/>
    </source>
</evidence>
<evidence type="ECO:0007829" key="17">
    <source>
        <dbReference type="PDB" id="4UAF"/>
    </source>
</evidence>
<evidence type="ECO:0007829" key="18">
    <source>
        <dbReference type="PDB" id="5HUY"/>
    </source>
</evidence>
<evidence type="ECO:0007829" key="19">
    <source>
        <dbReference type="PDB" id="6K06"/>
    </source>
</evidence>
<organism>
    <name type="scientific">Mus musculus</name>
    <name type="common">Mouse</name>
    <dbReference type="NCBI Taxonomy" id="10090"/>
    <lineage>
        <taxon>Eukaryota</taxon>
        <taxon>Metazoa</taxon>
        <taxon>Chordata</taxon>
        <taxon>Craniata</taxon>
        <taxon>Vertebrata</taxon>
        <taxon>Euteleostomi</taxon>
        <taxon>Mammalia</taxon>
        <taxon>Eutheria</taxon>
        <taxon>Euarchontoglires</taxon>
        <taxon>Glires</taxon>
        <taxon>Rodentia</taxon>
        <taxon>Myomorpha</taxon>
        <taxon>Muroidea</taxon>
        <taxon>Muridae</taxon>
        <taxon>Murinae</taxon>
        <taxon>Mus</taxon>
        <taxon>Mus</taxon>
    </lineage>
</organism>
<proteinExistence type="evidence at protein level"/>
<accession>P52293</accession>
<accession>Q64292</accession>
<keyword id="KW-0002">3D-structure</keyword>
<keyword id="KW-0007">Acetylation</keyword>
<keyword id="KW-0963">Cytoplasm</keyword>
<keyword id="KW-0539">Nucleus</keyword>
<keyword id="KW-0597">Phosphoprotein</keyword>
<keyword id="KW-0653">Protein transport</keyword>
<keyword id="KW-1185">Reference proteome</keyword>
<keyword id="KW-0677">Repeat</keyword>
<keyword id="KW-0813">Transport</keyword>
<keyword id="KW-0832">Ubl conjugation</keyword>
<dbReference type="EMBL" id="D55720">
    <property type="protein sequence ID" value="BAA09536.1"/>
    <property type="molecule type" value="mRNA"/>
</dbReference>
<dbReference type="EMBL" id="U12270">
    <property type="protein sequence ID" value="AAA85281.1"/>
    <property type="molecule type" value="mRNA"/>
</dbReference>
<dbReference type="EMBL" id="U34229">
    <property type="protein sequence ID" value="AAC52451.1"/>
    <property type="molecule type" value="mRNA"/>
</dbReference>
<dbReference type="EMBL" id="BC003274">
    <property type="protein sequence ID" value="AAH03274.1"/>
    <property type="molecule type" value="mRNA"/>
</dbReference>
<dbReference type="EMBL" id="BC006720">
    <property type="protein sequence ID" value="AAH06720.1"/>
    <property type="molecule type" value="mRNA"/>
</dbReference>
<dbReference type="CCDS" id="CCDS25565.1"/>
<dbReference type="PIR" id="S57345">
    <property type="entry name" value="S57345"/>
</dbReference>
<dbReference type="PIR" id="S57873">
    <property type="entry name" value="S57873"/>
</dbReference>
<dbReference type="PIR" id="S62116">
    <property type="entry name" value="S62116"/>
</dbReference>
<dbReference type="RefSeq" id="NP_034785.1">
    <property type="nucleotide sequence ID" value="NM_010655.3"/>
</dbReference>
<dbReference type="PDB" id="1EJL">
    <property type="method" value="X-ray"/>
    <property type="resolution" value="2.80 A"/>
    <property type="chains" value="I=70-529"/>
</dbReference>
<dbReference type="PDB" id="1EJY">
    <property type="method" value="X-ray"/>
    <property type="resolution" value="2.90 A"/>
    <property type="chains" value="I=70-529"/>
</dbReference>
<dbReference type="PDB" id="1IAL">
    <property type="method" value="X-ray"/>
    <property type="resolution" value="2.50 A"/>
    <property type="chains" value="A=44-496"/>
</dbReference>
<dbReference type="PDB" id="1IQ1">
    <property type="method" value="X-ray"/>
    <property type="resolution" value="2.80 A"/>
    <property type="chains" value="A/B=44-54, C=70-529"/>
</dbReference>
<dbReference type="PDB" id="1PJM">
    <property type="method" value="X-ray"/>
    <property type="resolution" value="2.50 A"/>
    <property type="chains" value="B=70-529"/>
</dbReference>
<dbReference type="PDB" id="1PJN">
    <property type="method" value="X-ray"/>
    <property type="resolution" value="2.50 A"/>
    <property type="chains" value="B=70-529"/>
</dbReference>
<dbReference type="PDB" id="1Q1S">
    <property type="method" value="X-ray"/>
    <property type="resolution" value="2.30 A"/>
    <property type="chains" value="C=70-529"/>
</dbReference>
<dbReference type="PDB" id="1Q1T">
    <property type="method" value="X-ray"/>
    <property type="resolution" value="2.50 A"/>
    <property type="chains" value="C=70-529"/>
</dbReference>
<dbReference type="PDB" id="1Y2A">
    <property type="method" value="X-ray"/>
    <property type="resolution" value="2.20 A"/>
    <property type="chains" value="C=70-497"/>
</dbReference>
<dbReference type="PDB" id="2C1M">
    <property type="method" value="X-ray"/>
    <property type="resolution" value="2.20 A"/>
    <property type="chains" value="A=75-498"/>
</dbReference>
<dbReference type="PDB" id="2YNR">
    <property type="method" value="X-ray"/>
    <property type="resolution" value="2.30 A"/>
    <property type="chains" value="A=72-496"/>
</dbReference>
<dbReference type="PDB" id="3BTR">
    <property type="method" value="X-ray"/>
    <property type="resolution" value="2.60 A"/>
    <property type="chains" value="C=70-496"/>
</dbReference>
<dbReference type="PDB" id="3KND">
    <property type="method" value="X-ray"/>
    <property type="resolution" value="2.15 A"/>
    <property type="chains" value="A=70-529"/>
</dbReference>
<dbReference type="PDB" id="3L3Q">
    <property type="method" value="X-ray"/>
    <property type="resolution" value="2.30 A"/>
    <property type="chains" value="A=71-497"/>
</dbReference>
<dbReference type="PDB" id="3OQS">
    <property type="method" value="X-ray"/>
    <property type="resolution" value="2.00 A"/>
    <property type="chains" value="A=70-529"/>
</dbReference>
<dbReference type="PDB" id="3Q5U">
    <property type="method" value="X-ray"/>
    <property type="resolution" value="2.50 A"/>
    <property type="chains" value="A=70-529"/>
</dbReference>
<dbReference type="PDB" id="3RZ9">
    <property type="method" value="X-ray"/>
    <property type="resolution" value="2.29 A"/>
    <property type="chains" value="A=70-529"/>
</dbReference>
<dbReference type="PDB" id="3RZX">
    <property type="method" value="X-ray"/>
    <property type="resolution" value="2.61 A"/>
    <property type="chains" value="A=70-529"/>
</dbReference>
<dbReference type="PDB" id="3TPM">
    <property type="method" value="X-ray"/>
    <property type="resolution" value="2.10 A"/>
    <property type="chains" value="A=75-496"/>
</dbReference>
<dbReference type="PDB" id="3TPO">
    <property type="method" value="X-ray"/>
    <property type="resolution" value="2.10 A"/>
    <property type="chains" value="A=1-529"/>
</dbReference>
<dbReference type="PDB" id="3UKW">
    <property type="method" value="X-ray"/>
    <property type="resolution" value="2.10 A"/>
    <property type="chains" value="B=70-529"/>
</dbReference>
<dbReference type="PDB" id="3UKX">
    <property type="method" value="X-ray"/>
    <property type="resolution" value="2.20 A"/>
    <property type="chains" value="B=70-529"/>
</dbReference>
<dbReference type="PDB" id="3UKY">
    <property type="method" value="X-ray"/>
    <property type="resolution" value="2.35 A"/>
    <property type="chains" value="B=70-529"/>
</dbReference>
<dbReference type="PDB" id="3UKZ">
    <property type="method" value="X-ray"/>
    <property type="resolution" value="2.30 A"/>
    <property type="chains" value="B=70-529"/>
</dbReference>
<dbReference type="PDB" id="3UL0">
    <property type="method" value="X-ray"/>
    <property type="resolution" value="2.00 A"/>
    <property type="chains" value="B=70-529"/>
</dbReference>
<dbReference type="PDB" id="3UL1">
    <property type="method" value="X-ray"/>
    <property type="resolution" value="1.90 A"/>
    <property type="chains" value="B=70-529"/>
</dbReference>
<dbReference type="PDB" id="3UVU">
    <property type="method" value="X-ray"/>
    <property type="resolution" value="2.38 A"/>
    <property type="chains" value="A=70-529"/>
</dbReference>
<dbReference type="PDB" id="3VE6">
    <property type="method" value="X-ray"/>
    <property type="resolution" value="2.83 A"/>
    <property type="chains" value="A=71-496"/>
</dbReference>
<dbReference type="PDB" id="3ZIN">
    <property type="method" value="X-ray"/>
    <property type="resolution" value="2.00 A"/>
    <property type="chains" value="A=72-496"/>
</dbReference>
<dbReference type="PDB" id="3ZIO">
    <property type="method" value="X-ray"/>
    <property type="resolution" value="2.10 A"/>
    <property type="chains" value="A=72-496"/>
</dbReference>
<dbReference type="PDB" id="3ZIP">
    <property type="method" value="X-ray"/>
    <property type="resolution" value="2.40 A"/>
    <property type="chains" value="A=72-497"/>
</dbReference>
<dbReference type="PDB" id="3ZIQ">
    <property type="method" value="X-ray"/>
    <property type="resolution" value="2.10 A"/>
    <property type="chains" value="A=72-497"/>
</dbReference>
<dbReference type="PDB" id="3ZIR">
    <property type="method" value="X-ray"/>
    <property type="resolution" value="2.30 A"/>
    <property type="chains" value="A=72-497"/>
</dbReference>
<dbReference type="PDB" id="4BA3">
    <property type="method" value="X-ray"/>
    <property type="resolution" value="2.10 A"/>
    <property type="chains" value="A=70-529"/>
</dbReference>
<dbReference type="PDB" id="4HTV">
    <property type="method" value="X-ray"/>
    <property type="resolution" value="3.00 A"/>
    <property type="chains" value="A=70-528"/>
</dbReference>
<dbReference type="PDB" id="4MZ5">
    <property type="method" value="X-ray"/>
    <property type="resolution" value="2.10 A"/>
    <property type="chains" value="E=70-528"/>
</dbReference>
<dbReference type="PDB" id="4MZ6">
    <property type="method" value="X-ray"/>
    <property type="resolution" value="1.88 A"/>
    <property type="chains" value="E=70-528"/>
</dbReference>
<dbReference type="PDB" id="4OIH">
    <property type="method" value="X-ray"/>
    <property type="resolution" value="2.10 A"/>
    <property type="chains" value="A=70-529"/>
</dbReference>
<dbReference type="PDB" id="4U54">
    <property type="method" value="X-ray"/>
    <property type="resolution" value="2.41 A"/>
    <property type="chains" value="A=74-498"/>
</dbReference>
<dbReference type="PDB" id="4U58">
    <property type="method" value="X-ray"/>
    <property type="resolution" value="2.56 A"/>
    <property type="chains" value="A=72-497"/>
</dbReference>
<dbReference type="PDB" id="4U5L">
    <property type="method" value="X-ray"/>
    <property type="resolution" value="2.53 A"/>
    <property type="chains" value="A=72-497"/>
</dbReference>
<dbReference type="PDB" id="4U5N">
    <property type="method" value="X-ray"/>
    <property type="resolution" value="2.31 A"/>
    <property type="chains" value="A=72-497"/>
</dbReference>
<dbReference type="PDB" id="4U5O">
    <property type="method" value="X-ray"/>
    <property type="resolution" value="2.00 A"/>
    <property type="chains" value="A=72-497"/>
</dbReference>
<dbReference type="PDB" id="4U5S">
    <property type="method" value="X-ray"/>
    <property type="resolution" value="2.12 A"/>
    <property type="chains" value="A=72-497"/>
</dbReference>
<dbReference type="PDB" id="4U5U">
    <property type="method" value="X-ray"/>
    <property type="resolution" value="1.96 A"/>
    <property type="chains" value="A=72-497"/>
</dbReference>
<dbReference type="PDB" id="4U5V">
    <property type="method" value="X-ray"/>
    <property type="resolution" value="1.97 A"/>
    <property type="chains" value="A=72-497"/>
</dbReference>
<dbReference type="PDB" id="4UAF">
    <property type="method" value="X-ray"/>
    <property type="resolution" value="1.70 A"/>
    <property type="chains" value="B=69-529"/>
</dbReference>
<dbReference type="PDB" id="4YI0">
    <property type="method" value="X-ray"/>
    <property type="resolution" value="1.81 A"/>
    <property type="chains" value="C=70-529"/>
</dbReference>
<dbReference type="PDB" id="4ZDU">
    <property type="method" value="X-ray"/>
    <property type="resolution" value="2.30 A"/>
    <property type="chains" value="A=72-498"/>
</dbReference>
<dbReference type="PDB" id="5B56">
    <property type="method" value="X-ray"/>
    <property type="resolution" value="2.30 A"/>
    <property type="chains" value="A/B=70-529"/>
</dbReference>
<dbReference type="PDB" id="5CTT">
    <property type="method" value="X-ray"/>
    <property type="resolution" value="1.70 A"/>
    <property type="chains" value="A=72-497"/>
</dbReference>
<dbReference type="PDB" id="5D5K">
    <property type="method" value="X-ray"/>
    <property type="resolution" value="1.90 A"/>
    <property type="chains" value="C=70-529"/>
</dbReference>
<dbReference type="PDB" id="5E6Q">
    <property type="method" value="X-ray"/>
    <property type="resolution" value="2.31 A"/>
    <property type="chains" value="B=70-529"/>
</dbReference>
<dbReference type="PDB" id="5EKF">
    <property type="method" value="X-ray"/>
    <property type="resolution" value="2.00 A"/>
    <property type="chains" value="A=70-529"/>
</dbReference>
<dbReference type="PDB" id="5EKG">
    <property type="method" value="X-ray"/>
    <property type="resolution" value="2.80 A"/>
    <property type="chains" value="A=70-529"/>
</dbReference>
<dbReference type="PDB" id="5FC8">
    <property type="method" value="X-ray"/>
    <property type="resolution" value="2.10 A"/>
    <property type="chains" value="E=71-529"/>
</dbReference>
<dbReference type="PDB" id="5GXW">
    <property type="method" value="X-ray"/>
    <property type="resolution" value="2.39 A"/>
    <property type="chains" value="A=70-497"/>
</dbReference>
<dbReference type="PDB" id="5HHG">
    <property type="method" value="X-ray"/>
    <property type="resolution" value="2.20 A"/>
    <property type="chains" value="E=71-497"/>
</dbReference>
<dbReference type="PDB" id="5HUW">
    <property type="method" value="X-ray"/>
    <property type="resolution" value="1.95 A"/>
    <property type="chains" value="C=2-529"/>
</dbReference>
<dbReference type="PDB" id="5HUY">
    <property type="method" value="X-ray"/>
    <property type="resolution" value="1.98 A"/>
    <property type="chains" value="C=2-529"/>
</dbReference>
<dbReference type="PDB" id="5K9S">
    <property type="method" value="X-ray"/>
    <property type="resolution" value="2.40 A"/>
    <property type="chains" value="A=72-529"/>
</dbReference>
<dbReference type="PDB" id="5KLR">
    <property type="method" value="X-ray"/>
    <property type="resolution" value="2.20 A"/>
    <property type="chains" value="B=70-529"/>
</dbReference>
<dbReference type="PDB" id="5KLT">
    <property type="method" value="X-ray"/>
    <property type="resolution" value="2.60 A"/>
    <property type="chains" value="B=70-529"/>
</dbReference>
<dbReference type="PDB" id="5SVZ">
    <property type="method" value="X-ray"/>
    <property type="resolution" value="2.00 A"/>
    <property type="chains" value="A=70-529"/>
</dbReference>
<dbReference type="PDB" id="5U5P">
    <property type="method" value="X-ray"/>
    <property type="resolution" value="2.17 A"/>
    <property type="chains" value="A=70-529"/>
</dbReference>
<dbReference type="PDB" id="5U5R">
    <property type="method" value="X-ray"/>
    <property type="resolution" value="2.10 A"/>
    <property type="chains" value="A=70-529"/>
</dbReference>
<dbReference type="PDB" id="5UMZ">
    <property type="method" value="X-ray"/>
    <property type="resolution" value="1.90 A"/>
    <property type="chains" value="B=70-528"/>
</dbReference>
<dbReference type="PDB" id="5V5O">
    <property type="method" value="X-ray"/>
    <property type="resolution" value="2.24 A"/>
    <property type="chains" value="C=2-529"/>
</dbReference>
<dbReference type="PDB" id="5V5P">
    <property type="method" value="X-ray"/>
    <property type="resolution" value="2.15 A"/>
    <property type="chains" value="C=2-529"/>
</dbReference>
<dbReference type="PDB" id="5W41">
    <property type="method" value="X-ray"/>
    <property type="resolution" value="2.20 A"/>
    <property type="chains" value="A=70-529"/>
</dbReference>
<dbReference type="PDB" id="5W4E">
    <property type="method" value="X-ray"/>
    <property type="resolution" value="2.18 A"/>
    <property type="chains" value="B=37-529"/>
</dbReference>
<dbReference type="PDB" id="5W4F">
    <property type="method" value="X-ray"/>
    <property type="resolution" value="1.98 A"/>
    <property type="chains" value="B=70-529"/>
</dbReference>
<dbReference type="PDB" id="5W4G">
    <property type="method" value="X-ray"/>
    <property type="resolution" value="2.04 A"/>
    <property type="chains" value="B=70-529"/>
</dbReference>
<dbReference type="PDB" id="5WUM">
    <property type="method" value="X-ray"/>
    <property type="resolution" value="2.00 A"/>
    <property type="chains" value="A=70-529"/>
</dbReference>
<dbReference type="PDB" id="5WUN">
    <property type="method" value="X-ray"/>
    <property type="resolution" value="2.20 A"/>
    <property type="chains" value="A=70-529"/>
</dbReference>
<dbReference type="PDB" id="5X8N">
    <property type="method" value="X-ray"/>
    <property type="resolution" value="2.15 A"/>
    <property type="chains" value="A=70-529"/>
</dbReference>
<dbReference type="PDB" id="6BVT">
    <property type="method" value="X-ray"/>
    <property type="resolution" value="2.50 A"/>
    <property type="chains" value="E=70-529"/>
</dbReference>
<dbReference type="PDB" id="6BW0">
    <property type="method" value="X-ray"/>
    <property type="resolution" value="2.10 A"/>
    <property type="chains" value="E=70-529"/>
</dbReference>
<dbReference type="PDB" id="6BW1">
    <property type="method" value="X-ray"/>
    <property type="resolution" value="2.20 A"/>
    <property type="chains" value="E=70-529"/>
</dbReference>
<dbReference type="PDB" id="6D7M">
    <property type="method" value="X-ray"/>
    <property type="resolution" value="2.19 A"/>
    <property type="chains" value="B=37-529"/>
</dbReference>
<dbReference type="PDB" id="6D7N">
    <property type="method" value="X-ray"/>
    <property type="resolution" value="2.30 A"/>
    <property type="chains" value="B=70-529"/>
</dbReference>
<dbReference type="PDB" id="6IU7">
    <property type="method" value="X-ray"/>
    <property type="resolution" value="1.90 A"/>
    <property type="chains" value="A=72-498"/>
</dbReference>
<dbReference type="PDB" id="6IUA">
    <property type="method" value="X-ray"/>
    <property type="resolution" value="1.70 A"/>
    <property type="chains" value="A=72-498"/>
</dbReference>
<dbReference type="PDB" id="6IW8">
    <property type="method" value="X-ray"/>
    <property type="resolution" value="2.80 A"/>
    <property type="chains" value="C=70-498"/>
</dbReference>
<dbReference type="PDB" id="6IWA">
    <property type="method" value="X-ray"/>
    <property type="resolution" value="2.40 A"/>
    <property type="chains" value="C=70-498"/>
</dbReference>
<dbReference type="PDB" id="6K06">
    <property type="method" value="X-ray"/>
    <property type="resolution" value="1.75 A"/>
    <property type="chains" value="C=70-498"/>
</dbReference>
<dbReference type="PDB" id="6MJL">
    <property type="method" value="X-ray"/>
    <property type="resolution" value="2.50 A"/>
    <property type="chains" value="B=72-497"/>
</dbReference>
<dbReference type="PDB" id="6P6A">
    <property type="method" value="X-ray"/>
    <property type="resolution" value="2.15 A"/>
    <property type="chains" value="B=70-529"/>
</dbReference>
<dbReference type="PDB" id="6P6E">
    <property type="method" value="X-ray"/>
    <property type="resolution" value="1.99 A"/>
    <property type="chains" value="A=70-529"/>
</dbReference>
<dbReference type="PDB" id="6WBA">
    <property type="method" value="X-ray"/>
    <property type="resolution" value="2.15 A"/>
    <property type="chains" value="A=70-529"/>
</dbReference>
<dbReference type="PDB" id="6WBB">
    <property type="method" value="X-ray"/>
    <property type="resolution" value="2.66 A"/>
    <property type="chains" value="I=70-529"/>
</dbReference>
<dbReference type="PDB" id="6WBC">
    <property type="method" value="X-ray"/>
    <property type="resolution" value="2.15 A"/>
    <property type="chains" value="A=70-529"/>
</dbReference>
<dbReference type="PDB" id="6WX7">
    <property type="method" value="X-ray"/>
    <property type="resolution" value="2.70 A"/>
    <property type="chains" value="A=70-529"/>
</dbReference>
<dbReference type="PDB" id="7JJM">
    <property type="method" value="X-ray"/>
    <property type="resolution" value="2.06 A"/>
    <property type="chains" value="B=62-529"/>
</dbReference>
<dbReference type="PDB" id="7JK7">
    <property type="method" value="X-ray"/>
    <property type="resolution" value="1.96 A"/>
    <property type="chains" value="B=62-529"/>
</dbReference>
<dbReference type="PDB" id="7JVO">
    <property type="method" value="X-ray"/>
    <property type="resolution" value="2.20 A"/>
    <property type="chains" value="A=70-529"/>
</dbReference>
<dbReference type="PDB" id="7L04">
    <property type="method" value="X-ray"/>
    <property type="resolution" value="2.26 A"/>
    <property type="chains" value="E=70-529"/>
</dbReference>
<dbReference type="PDB" id="7LEQ">
    <property type="method" value="X-ray"/>
    <property type="resolution" value="2.24 A"/>
    <property type="chains" value="E=70-497"/>
</dbReference>
<dbReference type="PDB" id="7LET">
    <property type="method" value="X-ray"/>
    <property type="resolution" value="2.40 A"/>
    <property type="chains" value="E=70-497"/>
</dbReference>
<dbReference type="PDB" id="7LEU">
    <property type="method" value="X-ray"/>
    <property type="resolution" value="2.82 A"/>
    <property type="chains" value="E=70-497"/>
</dbReference>
<dbReference type="PDB" id="7M60">
    <property type="method" value="X-ray"/>
    <property type="resolution" value="2.30 A"/>
    <property type="chains" value="A=70-529"/>
</dbReference>
<dbReference type="PDB" id="7RFX">
    <property type="method" value="X-ray"/>
    <property type="resolution" value="2.10 A"/>
    <property type="chains" value="A=70-529"/>
</dbReference>
<dbReference type="PDB" id="7RFZ">
    <property type="method" value="X-ray"/>
    <property type="resolution" value="1.95 A"/>
    <property type="chains" value="A=70-529"/>
</dbReference>
<dbReference type="PDB" id="7RG0">
    <property type="method" value="X-ray"/>
    <property type="resolution" value="2.00 A"/>
    <property type="chains" value="A=70-529"/>
</dbReference>
<dbReference type="PDB" id="7RG1">
    <property type="method" value="X-ray"/>
    <property type="resolution" value="1.85 A"/>
    <property type="chains" value="A=70-529"/>
</dbReference>
<dbReference type="PDB" id="7RG2">
    <property type="method" value="X-ray"/>
    <property type="resolution" value="2.00 A"/>
    <property type="chains" value="A=70-529"/>
</dbReference>
<dbReference type="PDB" id="7RG3">
    <property type="method" value="X-ray"/>
    <property type="resolution" value="2.00 A"/>
    <property type="chains" value="A=70-529"/>
</dbReference>
<dbReference type="PDB" id="7RG4">
    <property type="method" value="X-ray"/>
    <property type="resolution" value="2.60 A"/>
    <property type="chains" value="E=70-529"/>
</dbReference>
<dbReference type="PDB" id="7RG6">
    <property type="method" value="X-ray"/>
    <property type="resolution" value="2.10 A"/>
    <property type="chains" value="A=70-529"/>
</dbReference>
<dbReference type="PDB" id="7TMX">
    <property type="method" value="X-ray"/>
    <property type="resolution" value="2.30 A"/>
    <property type="chains" value="I=70-529"/>
</dbReference>
<dbReference type="PDB" id="7TMY">
    <property type="method" value="X-ray"/>
    <property type="resolution" value="2.21 A"/>
    <property type="chains" value="I=70-529"/>
</dbReference>
<dbReference type="PDB" id="7UMI">
    <property type="method" value="X-ray"/>
    <property type="resolution" value="1.99 A"/>
    <property type="chains" value="E=70-529"/>
</dbReference>
<dbReference type="PDB" id="8ECH">
    <property type="method" value="X-ray"/>
    <property type="resolution" value="2.05 A"/>
    <property type="chains" value="E=70-529"/>
</dbReference>
<dbReference type="PDB" id="8F2Q">
    <property type="method" value="X-ray"/>
    <property type="resolution" value="2.70 A"/>
    <property type="chains" value="A=70-529"/>
</dbReference>
<dbReference type="PDB" id="8FK3">
    <property type="method" value="X-ray"/>
    <property type="resolution" value="2.60 A"/>
    <property type="chains" value="A=70-529"/>
</dbReference>
<dbReference type="PDB" id="8FUA">
    <property type="method" value="X-ray"/>
    <property type="resolution" value="1.90 A"/>
    <property type="chains" value="A=70-529"/>
</dbReference>
<dbReference type="PDB" id="8FUC">
    <property type="method" value="X-ray"/>
    <property type="resolution" value="2.10 A"/>
    <property type="chains" value="B=70-529"/>
</dbReference>
<dbReference type="PDB" id="8G8Q">
    <property type="method" value="X-ray"/>
    <property type="resolution" value="2.60 A"/>
    <property type="chains" value="A=70-529"/>
</dbReference>
<dbReference type="PDB" id="8G8R">
    <property type="method" value="X-ray"/>
    <property type="resolution" value="2.60 A"/>
    <property type="chains" value="A=70-529"/>
</dbReference>
<dbReference type="PDB" id="8G8S">
    <property type="method" value="X-ray"/>
    <property type="resolution" value="2.10 A"/>
    <property type="chains" value="A=70-529"/>
</dbReference>
<dbReference type="PDB" id="8HE0">
    <property type="method" value="X-ray"/>
    <property type="resolution" value="1.80 A"/>
    <property type="chains" value="A=72-498"/>
</dbReference>
<dbReference type="PDB" id="8HE3">
    <property type="method" value="X-ray"/>
    <property type="resolution" value="1.90 A"/>
    <property type="chains" value="A=72-498"/>
</dbReference>
<dbReference type="PDB" id="8Q8K">
    <property type="method" value="X-ray"/>
    <property type="resolution" value="2.70 A"/>
    <property type="chains" value="A/B=70-529"/>
</dbReference>
<dbReference type="PDB" id="8QXW">
    <property type="method" value="X-ray"/>
    <property type="resolution" value="2.00 A"/>
    <property type="chains" value="A=70-529"/>
</dbReference>
<dbReference type="PDB" id="8QXX">
    <property type="method" value="X-ray"/>
    <property type="resolution" value="1.90 A"/>
    <property type="chains" value="A=70-529"/>
</dbReference>
<dbReference type="PDB" id="8SG7">
    <property type="method" value="X-ray"/>
    <property type="resolution" value="2.40 A"/>
    <property type="chains" value="B=70-529"/>
</dbReference>
<dbReference type="PDB" id="8SUD">
    <property type="method" value="X-ray"/>
    <property type="resolution" value="2.10 A"/>
    <property type="chains" value="A=70-529"/>
</dbReference>
<dbReference type="PDB" id="8SV0">
    <property type="method" value="X-ray"/>
    <property type="resolution" value="2.20 A"/>
    <property type="chains" value="B=70-529"/>
</dbReference>
<dbReference type="PDB" id="8TUQ">
    <property type="method" value="X-ray"/>
    <property type="resolution" value="2.00 A"/>
    <property type="chains" value="A=70-529"/>
</dbReference>
<dbReference type="PDB" id="8TUR">
    <property type="method" value="X-ray"/>
    <property type="resolution" value="2.15 A"/>
    <property type="chains" value="A=70-529"/>
</dbReference>
<dbReference type="PDB" id="8TUS">
    <property type="method" value="X-ray"/>
    <property type="resolution" value="2.60 A"/>
    <property type="chains" value="A=70-529"/>
</dbReference>
<dbReference type="PDB" id="8TUT">
    <property type="method" value="X-ray"/>
    <property type="resolution" value="2.55 A"/>
    <property type="chains" value="A=70-529"/>
</dbReference>
<dbReference type="PDB" id="8TUU">
    <property type="method" value="X-ray"/>
    <property type="resolution" value="2.50 A"/>
    <property type="chains" value="A=70-529"/>
</dbReference>
<dbReference type="PDB" id="8TUV">
    <property type="method" value="X-ray"/>
    <property type="resolution" value="2.30 A"/>
    <property type="chains" value="A=70-529"/>
</dbReference>
<dbReference type="PDB" id="8U36">
    <property type="method" value="X-ray"/>
    <property type="resolution" value="2.60 A"/>
    <property type="chains" value="A=70-529"/>
</dbReference>
<dbReference type="PDB" id="8VPR">
    <property type="method" value="X-ray"/>
    <property type="resolution" value="2.70 A"/>
    <property type="chains" value="A=70-529"/>
</dbReference>
<dbReference type="PDB" id="8VPU">
    <property type="method" value="X-ray"/>
    <property type="resolution" value="2.10 A"/>
    <property type="chains" value="A=70-529"/>
</dbReference>
<dbReference type="PDB" id="9CFT">
    <property type="method" value="X-ray"/>
    <property type="resolution" value="2.30 A"/>
    <property type="chains" value="A=70-529"/>
</dbReference>
<dbReference type="PDBsum" id="1EJL"/>
<dbReference type="PDBsum" id="1EJY"/>
<dbReference type="PDBsum" id="1IAL"/>
<dbReference type="PDBsum" id="1IQ1"/>
<dbReference type="PDBsum" id="1PJM"/>
<dbReference type="PDBsum" id="1PJN"/>
<dbReference type="PDBsum" id="1Q1S"/>
<dbReference type="PDBsum" id="1Q1T"/>
<dbReference type="PDBsum" id="1Y2A"/>
<dbReference type="PDBsum" id="2C1M"/>
<dbReference type="PDBsum" id="2YNR"/>
<dbReference type="PDBsum" id="3BTR"/>
<dbReference type="PDBsum" id="3KND"/>
<dbReference type="PDBsum" id="3L3Q"/>
<dbReference type="PDBsum" id="3OQS"/>
<dbReference type="PDBsum" id="3Q5U"/>
<dbReference type="PDBsum" id="3RZ9"/>
<dbReference type="PDBsum" id="3RZX"/>
<dbReference type="PDBsum" id="3TPM"/>
<dbReference type="PDBsum" id="3TPO"/>
<dbReference type="PDBsum" id="3UKW"/>
<dbReference type="PDBsum" id="3UKX"/>
<dbReference type="PDBsum" id="3UKY"/>
<dbReference type="PDBsum" id="3UKZ"/>
<dbReference type="PDBsum" id="3UL0"/>
<dbReference type="PDBsum" id="3UL1"/>
<dbReference type="PDBsum" id="3UVU"/>
<dbReference type="PDBsum" id="3VE6"/>
<dbReference type="PDBsum" id="3ZIN"/>
<dbReference type="PDBsum" id="3ZIO"/>
<dbReference type="PDBsum" id="3ZIP"/>
<dbReference type="PDBsum" id="3ZIQ"/>
<dbReference type="PDBsum" id="3ZIR"/>
<dbReference type="PDBsum" id="4BA3"/>
<dbReference type="PDBsum" id="4HTV"/>
<dbReference type="PDBsum" id="4MZ5"/>
<dbReference type="PDBsum" id="4MZ6"/>
<dbReference type="PDBsum" id="4OIH"/>
<dbReference type="PDBsum" id="4U54"/>
<dbReference type="PDBsum" id="4U58"/>
<dbReference type="PDBsum" id="4U5L"/>
<dbReference type="PDBsum" id="4U5N"/>
<dbReference type="PDBsum" id="4U5O"/>
<dbReference type="PDBsum" id="4U5S"/>
<dbReference type="PDBsum" id="4U5U"/>
<dbReference type="PDBsum" id="4U5V"/>
<dbReference type="PDBsum" id="4UAF"/>
<dbReference type="PDBsum" id="4YI0"/>
<dbReference type="PDBsum" id="4ZDU"/>
<dbReference type="PDBsum" id="5B56"/>
<dbReference type="PDBsum" id="5CTT"/>
<dbReference type="PDBsum" id="5D5K"/>
<dbReference type="PDBsum" id="5E6Q"/>
<dbReference type="PDBsum" id="5EKF"/>
<dbReference type="PDBsum" id="5EKG"/>
<dbReference type="PDBsum" id="5FC8"/>
<dbReference type="PDBsum" id="5GXW"/>
<dbReference type="PDBsum" id="5HHG"/>
<dbReference type="PDBsum" id="5HUW"/>
<dbReference type="PDBsum" id="5HUY"/>
<dbReference type="PDBsum" id="5K9S"/>
<dbReference type="PDBsum" id="5KLR"/>
<dbReference type="PDBsum" id="5KLT"/>
<dbReference type="PDBsum" id="5SVZ"/>
<dbReference type="PDBsum" id="5U5P"/>
<dbReference type="PDBsum" id="5U5R"/>
<dbReference type="PDBsum" id="5UMZ"/>
<dbReference type="PDBsum" id="5V5O"/>
<dbReference type="PDBsum" id="5V5P"/>
<dbReference type="PDBsum" id="5W41"/>
<dbReference type="PDBsum" id="5W4E"/>
<dbReference type="PDBsum" id="5W4F"/>
<dbReference type="PDBsum" id="5W4G"/>
<dbReference type="PDBsum" id="5WUM"/>
<dbReference type="PDBsum" id="5WUN"/>
<dbReference type="PDBsum" id="5X8N"/>
<dbReference type="PDBsum" id="6BVT"/>
<dbReference type="PDBsum" id="6BW0"/>
<dbReference type="PDBsum" id="6BW1"/>
<dbReference type="PDBsum" id="6D7M"/>
<dbReference type="PDBsum" id="6D7N"/>
<dbReference type="PDBsum" id="6IU7"/>
<dbReference type="PDBsum" id="6IUA"/>
<dbReference type="PDBsum" id="6IW8"/>
<dbReference type="PDBsum" id="6IWA"/>
<dbReference type="PDBsum" id="6K06"/>
<dbReference type="PDBsum" id="6MJL"/>
<dbReference type="PDBsum" id="6P6A"/>
<dbReference type="PDBsum" id="6P6E"/>
<dbReference type="PDBsum" id="6WBA"/>
<dbReference type="PDBsum" id="6WBB"/>
<dbReference type="PDBsum" id="6WBC"/>
<dbReference type="PDBsum" id="6WX7"/>
<dbReference type="PDBsum" id="7JJM"/>
<dbReference type="PDBsum" id="7JK7"/>
<dbReference type="PDBsum" id="7JVO"/>
<dbReference type="PDBsum" id="7L04"/>
<dbReference type="PDBsum" id="7LEQ"/>
<dbReference type="PDBsum" id="7LET"/>
<dbReference type="PDBsum" id="7LEU"/>
<dbReference type="PDBsum" id="7M60"/>
<dbReference type="PDBsum" id="7RFX"/>
<dbReference type="PDBsum" id="7RFZ"/>
<dbReference type="PDBsum" id="7RG0"/>
<dbReference type="PDBsum" id="7RG1"/>
<dbReference type="PDBsum" id="7RG2"/>
<dbReference type="PDBsum" id="7RG3"/>
<dbReference type="PDBsum" id="7RG4"/>
<dbReference type="PDBsum" id="7RG6"/>
<dbReference type="PDBsum" id="7TMX"/>
<dbReference type="PDBsum" id="7TMY"/>
<dbReference type="PDBsum" id="7UMI"/>
<dbReference type="PDBsum" id="8ECH"/>
<dbReference type="PDBsum" id="8F2Q"/>
<dbReference type="PDBsum" id="8FK3"/>
<dbReference type="PDBsum" id="8FUA"/>
<dbReference type="PDBsum" id="8FUC"/>
<dbReference type="PDBsum" id="8G8Q"/>
<dbReference type="PDBsum" id="8G8R"/>
<dbReference type="PDBsum" id="8G8S"/>
<dbReference type="PDBsum" id="8HE0"/>
<dbReference type="PDBsum" id="8HE3"/>
<dbReference type="PDBsum" id="8Q8K"/>
<dbReference type="PDBsum" id="8QXW"/>
<dbReference type="PDBsum" id="8QXX"/>
<dbReference type="PDBsum" id="8SG7"/>
<dbReference type="PDBsum" id="8SUD"/>
<dbReference type="PDBsum" id="8SV0"/>
<dbReference type="PDBsum" id="8TUQ"/>
<dbReference type="PDBsum" id="8TUR"/>
<dbReference type="PDBsum" id="8TUS"/>
<dbReference type="PDBsum" id="8TUT"/>
<dbReference type="PDBsum" id="8TUU"/>
<dbReference type="PDBsum" id="8TUV"/>
<dbReference type="PDBsum" id="8U36"/>
<dbReference type="PDBsum" id="8VPR"/>
<dbReference type="PDBsum" id="8VPU"/>
<dbReference type="PDBsum" id="9CFT"/>
<dbReference type="SMR" id="P52293"/>
<dbReference type="BioGRID" id="201007">
    <property type="interactions" value="30"/>
</dbReference>
<dbReference type="ComplexPortal" id="CPX-1054">
    <property type="entry name" value="Importin complex, KPNA2 variant"/>
</dbReference>
<dbReference type="CORUM" id="P52293"/>
<dbReference type="DIP" id="DIP-47774N"/>
<dbReference type="ELM" id="P52293"/>
<dbReference type="FunCoup" id="P52293">
    <property type="interactions" value="1072"/>
</dbReference>
<dbReference type="IntAct" id="P52293">
    <property type="interactions" value="16"/>
</dbReference>
<dbReference type="MINT" id="P52293"/>
<dbReference type="STRING" id="10090.ENSMUSP00000018506"/>
<dbReference type="GlyGen" id="P52293">
    <property type="glycosylation" value="1 site, 1 O-linked glycan (1 site)"/>
</dbReference>
<dbReference type="iPTMnet" id="P52293"/>
<dbReference type="PhosphoSitePlus" id="P52293"/>
<dbReference type="SwissPalm" id="P52293"/>
<dbReference type="PaxDb" id="10090-ENSMUSP00000018506"/>
<dbReference type="PeptideAtlas" id="P52293"/>
<dbReference type="ProteomicsDB" id="267239"/>
<dbReference type="Pumba" id="P52293"/>
<dbReference type="DNASU" id="16647"/>
<dbReference type="Ensembl" id="ENSMUST00000018506.13">
    <property type="protein sequence ID" value="ENSMUSP00000018506.7"/>
    <property type="gene ID" value="ENSMUSG00000018362.15"/>
</dbReference>
<dbReference type="Ensembl" id="ENSMUST00000086423.6">
    <property type="protein sequence ID" value="ENSMUSP00000137310.2"/>
    <property type="gene ID" value="ENSMUSG00000066878.6"/>
</dbReference>
<dbReference type="GeneID" id="16647"/>
<dbReference type="KEGG" id="mmu:16647"/>
<dbReference type="UCSC" id="uc007lzz.1">
    <property type="organism name" value="mouse"/>
</dbReference>
<dbReference type="AGR" id="MGI:103561"/>
<dbReference type="CTD" id="3838"/>
<dbReference type="MGI" id="MGI:103561">
    <property type="gene designation" value="Kpna2"/>
</dbReference>
<dbReference type="VEuPathDB" id="HostDB:ENSMUSG00000018362"/>
<dbReference type="VEuPathDB" id="HostDB:ENSMUSG00000066878"/>
<dbReference type="eggNOG" id="KOG0166">
    <property type="taxonomic scope" value="Eukaryota"/>
</dbReference>
<dbReference type="GeneTree" id="ENSGT01050000244891"/>
<dbReference type="HOGENOM" id="CLU_018084_6_1_1"/>
<dbReference type="InParanoid" id="P52293"/>
<dbReference type="OMA" id="CVIEHNA"/>
<dbReference type="OrthoDB" id="29145at2759"/>
<dbReference type="PhylomeDB" id="P52293"/>
<dbReference type="TreeFam" id="TF101178"/>
<dbReference type="Reactome" id="R-MMU-5693548">
    <property type="pathway name" value="Sensing of DNA Double Strand Breaks"/>
</dbReference>
<dbReference type="BioGRID-ORCS" id="16647">
    <property type="hits" value="11 hits in 77 CRISPR screens"/>
</dbReference>
<dbReference type="CD-CODE" id="3F0300C2">
    <property type="entry name" value="Nuclear speckle"/>
</dbReference>
<dbReference type="CD-CODE" id="D12E4DB9">
    <property type="entry name" value="Stress granule"/>
</dbReference>
<dbReference type="ChiTaRS" id="Kpna2">
    <property type="organism name" value="mouse"/>
</dbReference>
<dbReference type="EvolutionaryTrace" id="P52293"/>
<dbReference type="PRO" id="PR:P52293"/>
<dbReference type="Proteomes" id="UP000000589">
    <property type="component" value="Chromosome 11"/>
</dbReference>
<dbReference type="Proteomes" id="UP000000589">
    <property type="component" value="Chromosome 17"/>
</dbReference>
<dbReference type="RNAct" id="P52293">
    <property type="molecule type" value="protein"/>
</dbReference>
<dbReference type="Bgee" id="ENSMUSG00000018362">
    <property type="expression patterns" value="Expressed in animal zygote and 167 other cell types or tissues"/>
</dbReference>
<dbReference type="ExpressionAtlas" id="P52293">
    <property type="expression patterns" value="baseline and differential"/>
</dbReference>
<dbReference type="GO" id="GO:0010494">
    <property type="term" value="C:cytoplasmic stress granule"/>
    <property type="evidence" value="ECO:0000314"/>
    <property type="project" value="ARUK-UCL"/>
</dbReference>
<dbReference type="GO" id="GO:0005829">
    <property type="term" value="C:cytosol"/>
    <property type="evidence" value="ECO:0000304"/>
    <property type="project" value="Reactome"/>
</dbReference>
<dbReference type="GO" id="GO:0098978">
    <property type="term" value="C:glutamatergic synapse"/>
    <property type="evidence" value="ECO:0000314"/>
    <property type="project" value="SynGO"/>
</dbReference>
<dbReference type="GO" id="GO:0043657">
    <property type="term" value="C:host cell"/>
    <property type="evidence" value="ECO:0007669"/>
    <property type="project" value="GOC"/>
</dbReference>
<dbReference type="GO" id="GO:0042564">
    <property type="term" value="C:NLS-dependent protein nuclear import complex"/>
    <property type="evidence" value="ECO:0000266"/>
    <property type="project" value="ComplexPortal"/>
</dbReference>
<dbReference type="GO" id="GO:0005654">
    <property type="term" value="C:nucleoplasm"/>
    <property type="evidence" value="ECO:0000304"/>
    <property type="project" value="Reactome"/>
</dbReference>
<dbReference type="GO" id="GO:0014069">
    <property type="term" value="C:postsynaptic density"/>
    <property type="evidence" value="ECO:0000314"/>
    <property type="project" value="SynGO"/>
</dbReference>
<dbReference type="GO" id="GO:0140297">
    <property type="term" value="F:DNA-binding transcription factor binding"/>
    <property type="evidence" value="ECO:0000353"/>
    <property type="project" value="CAFA"/>
</dbReference>
<dbReference type="GO" id="GO:0061608">
    <property type="term" value="F:nuclear import signal receptor activity"/>
    <property type="evidence" value="ECO:0000314"/>
    <property type="project" value="MGI"/>
</dbReference>
<dbReference type="GO" id="GO:0075506">
    <property type="term" value="P:entry of viral genome into host nucleus through nuclear pore complex via importin"/>
    <property type="evidence" value="ECO:0000315"/>
    <property type="project" value="MGI"/>
</dbReference>
<dbReference type="GO" id="GO:1903902">
    <property type="term" value="P:positive regulation of viral life cycle"/>
    <property type="evidence" value="ECO:0000315"/>
    <property type="project" value="MGI"/>
</dbReference>
<dbReference type="GO" id="GO:0099527">
    <property type="term" value="P:postsynapse to nucleus signaling pathway"/>
    <property type="evidence" value="ECO:0000314"/>
    <property type="project" value="SynGO"/>
</dbReference>
<dbReference type="GO" id="GO:0006606">
    <property type="term" value="P:protein import into nucleus"/>
    <property type="evidence" value="ECO:0000314"/>
    <property type="project" value="MGI"/>
</dbReference>
<dbReference type="FunFam" id="1.20.5.690:FF:000005">
    <property type="entry name" value="Importin subunit alpha"/>
    <property type="match status" value="1"/>
</dbReference>
<dbReference type="FunFam" id="1.25.10.10:FF:000009">
    <property type="entry name" value="Importin subunit alpha"/>
    <property type="match status" value="1"/>
</dbReference>
<dbReference type="Gene3D" id="1.20.5.690">
    <property type="entry name" value="Importin-alpha, importin-beta-binding domain"/>
    <property type="match status" value="1"/>
</dbReference>
<dbReference type="Gene3D" id="1.25.10.10">
    <property type="entry name" value="Leucine-rich Repeat Variant"/>
    <property type="match status" value="1"/>
</dbReference>
<dbReference type="IDEAL" id="IID50009"/>
<dbReference type="InterPro" id="IPR011989">
    <property type="entry name" value="ARM-like"/>
</dbReference>
<dbReference type="InterPro" id="IPR016024">
    <property type="entry name" value="ARM-type_fold"/>
</dbReference>
<dbReference type="InterPro" id="IPR032413">
    <property type="entry name" value="Arm_3"/>
</dbReference>
<dbReference type="InterPro" id="IPR000225">
    <property type="entry name" value="Armadillo"/>
</dbReference>
<dbReference type="InterPro" id="IPR002652">
    <property type="entry name" value="Importin-a_IBB"/>
</dbReference>
<dbReference type="InterPro" id="IPR036975">
    <property type="entry name" value="Importin-a_IBB_sf"/>
</dbReference>
<dbReference type="InterPro" id="IPR024931">
    <property type="entry name" value="Importin_alpha"/>
</dbReference>
<dbReference type="PANTHER" id="PTHR23316">
    <property type="entry name" value="IMPORTIN ALPHA"/>
    <property type="match status" value="1"/>
</dbReference>
<dbReference type="Pfam" id="PF00514">
    <property type="entry name" value="Arm"/>
    <property type="match status" value="7"/>
</dbReference>
<dbReference type="Pfam" id="PF16186">
    <property type="entry name" value="Arm_3"/>
    <property type="match status" value="1"/>
</dbReference>
<dbReference type="Pfam" id="PF01749">
    <property type="entry name" value="IBB"/>
    <property type="match status" value="1"/>
</dbReference>
<dbReference type="PIRSF" id="PIRSF005673">
    <property type="entry name" value="Importin_alpha"/>
    <property type="match status" value="1"/>
</dbReference>
<dbReference type="SMART" id="SM00185">
    <property type="entry name" value="ARM"/>
    <property type="match status" value="8"/>
</dbReference>
<dbReference type="SUPFAM" id="SSF48371">
    <property type="entry name" value="ARM repeat"/>
    <property type="match status" value="1"/>
</dbReference>
<dbReference type="PROSITE" id="PS50176">
    <property type="entry name" value="ARM_REPEAT"/>
    <property type="match status" value="6"/>
</dbReference>
<dbReference type="PROSITE" id="PS51214">
    <property type="entry name" value="IBB"/>
    <property type="match status" value="1"/>
</dbReference>
<feature type="initiator methionine" description="Removed" evidence="1">
    <location>
        <position position="1"/>
    </location>
</feature>
<feature type="chain" id="PRO_0000120723" description="Importin subunit alpha-1">
    <location>
        <begin position="2"/>
        <end position="529"/>
    </location>
</feature>
<feature type="domain" description="IBB" evidence="2">
    <location>
        <begin position="2"/>
        <end position="60"/>
    </location>
</feature>
<feature type="repeat" description="ARM 1; truncated">
    <location>
        <begin position="71"/>
        <end position="111"/>
    </location>
</feature>
<feature type="repeat" description="ARM 2">
    <location>
        <begin position="112"/>
        <end position="151"/>
    </location>
</feature>
<feature type="repeat" description="ARM 3">
    <location>
        <begin position="152"/>
        <end position="193"/>
    </location>
</feature>
<feature type="repeat" description="ARM 4">
    <location>
        <begin position="200"/>
        <end position="244"/>
    </location>
</feature>
<feature type="repeat" description="ARM 5">
    <location>
        <begin position="246"/>
        <end position="282"/>
    </location>
</feature>
<feature type="repeat" description="ARM 6">
    <location>
        <begin position="283"/>
        <end position="322"/>
    </location>
</feature>
<feature type="repeat" description="ARM 7">
    <location>
        <begin position="325"/>
        <end position="364"/>
    </location>
</feature>
<feature type="repeat" description="ARM 8">
    <location>
        <begin position="367"/>
        <end position="409"/>
    </location>
</feature>
<feature type="repeat" description="ARM 9">
    <location>
        <begin position="410"/>
        <end position="456"/>
    </location>
</feature>
<feature type="repeat" description="ARM 10; atypical">
    <location>
        <begin position="457"/>
        <end position="496"/>
    </location>
</feature>
<feature type="region of interest" description="Disordered" evidence="3">
    <location>
        <begin position="45"/>
        <end position="70"/>
    </location>
</feature>
<feature type="region of interest" description="NLS binding site (major)" evidence="6">
    <location>
        <begin position="142"/>
        <end position="238"/>
    </location>
</feature>
<feature type="region of interest" description="NLS binding site (minor)" evidence="6">
    <location>
        <begin position="315"/>
        <end position="403"/>
    </location>
</feature>
<feature type="short sequence motif" description="Nuclear localization signal" evidence="4 6">
    <location>
        <begin position="45"/>
        <end position="54"/>
    </location>
</feature>
<feature type="modified residue" description="N-acetylserine" evidence="1">
    <location>
        <position position="2"/>
    </location>
</feature>
<feature type="modified residue" description="Phosphoserine" evidence="13">
    <location>
        <position position="62"/>
    </location>
</feature>
<feature type="sequence conflict" description="In Ref. 2; AAA85281." evidence="10" ref="2">
    <original>P</original>
    <variation>S</variation>
    <location>
        <position position="242"/>
    </location>
</feature>
<feature type="sequence conflict" description="In Ref. 2; AAA85281." evidence="10" ref="2">
    <original>H</original>
    <variation>P</variation>
    <location>
        <position position="418"/>
    </location>
</feature>
<feature type="sequence conflict" description="In Ref. 2; AAA85281." evidence="10" ref="2">
    <original>G</original>
    <variation>R</variation>
    <location>
        <position position="420"/>
    </location>
</feature>
<feature type="helix" evidence="16">
    <location>
        <begin position="71"/>
        <end position="73"/>
    </location>
</feature>
<feature type="helix" evidence="17">
    <location>
        <begin position="78"/>
        <end position="85"/>
    </location>
</feature>
<feature type="strand" evidence="15">
    <location>
        <begin position="86"/>
        <end position="88"/>
    </location>
</feature>
<feature type="helix" evidence="17">
    <location>
        <begin position="90"/>
        <end position="105"/>
    </location>
</feature>
<feature type="strand" evidence="17">
    <location>
        <begin position="106"/>
        <end position="109"/>
    </location>
</feature>
<feature type="helix" evidence="17">
    <location>
        <begin position="112"/>
        <end position="117"/>
    </location>
</feature>
<feature type="helix" evidence="17">
    <location>
        <begin position="121"/>
        <end position="128"/>
    </location>
</feature>
<feature type="helix" evidence="14">
    <location>
        <begin position="131"/>
        <end position="133"/>
    </location>
</feature>
<feature type="helix" evidence="17">
    <location>
        <begin position="134"/>
        <end position="148"/>
    </location>
</feature>
<feature type="helix" evidence="17">
    <location>
        <begin position="152"/>
        <end position="160"/>
    </location>
</feature>
<feature type="helix" evidence="17">
    <location>
        <begin position="163"/>
        <end position="170"/>
    </location>
</feature>
<feature type="helix" evidence="17">
    <location>
        <begin position="176"/>
        <end position="191"/>
    </location>
</feature>
<feature type="helix" evidence="17">
    <location>
        <begin position="194"/>
        <end position="202"/>
    </location>
</feature>
<feature type="helix" evidence="17">
    <location>
        <begin position="206"/>
        <end position="211"/>
    </location>
</feature>
<feature type="helix" evidence="17">
    <location>
        <begin position="218"/>
        <end position="220"/>
    </location>
</feature>
<feature type="helix" evidence="17">
    <location>
        <begin position="223"/>
        <end position="236"/>
    </location>
</feature>
<feature type="helix" evidence="17">
    <location>
        <begin position="246"/>
        <end position="259"/>
    </location>
</feature>
<feature type="helix" evidence="17">
    <location>
        <begin position="265"/>
        <end position="278"/>
    </location>
</feature>
<feature type="strand" evidence="19">
    <location>
        <begin position="280"/>
        <end position="282"/>
    </location>
</feature>
<feature type="helix" evidence="17">
    <location>
        <begin position="283"/>
        <end position="290"/>
    </location>
</feature>
<feature type="turn" evidence="17">
    <location>
        <begin position="291"/>
        <end position="293"/>
    </location>
</feature>
<feature type="helix" evidence="17">
    <location>
        <begin position="295"/>
        <end position="302"/>
    </location>
</feature>
<feature type="helix" evidence="17">
    <location>
        <begin position="307"/>
        <end position="320"/>
    </location>
</feature>
<feature type="helix" evidence="17">
    <location>
        <begin position="325"/>
        <end position="333"/>
    </location>
</feature>
<feature type="helix" evidence="17">
    <location>
        <begin position="336"/>
        <end position="339"/>
    </location>
</feature>
<feature type="helix" evidence="17">
    <location>
        <begin position="340"/>
        <end position="343"/>
    </location>
</feature>
<feature type="helix" evidence="17">
    <location>
        <begin position="349"/>
        <end position="362"/>
    </location>
</feature>
<feature type="helix" evidence="17">
    <location>
        <begin position="367"/>
        <end position="375"/>
    </location>
</feature>
<feature type="helix" evidence="17">
    <location>
        <begin position="378"/>
        <end position="387"/>
    </location>
</feature>
<feature type="helix" evidence="17">
    <location>
        <begin position="391"/>
        <end position="407"/>
    </location>
</feature>
<feature type="helix" evidence="17">
    <location>
        <begin position="410"/>
        <end position="418"/>
    </location>
</feature>
<feature type="helix" evidence="17">
    <location>
        <begin position="422"/>
        <end position="427"/>
    </location>
</feature>
<feature type="helix" evidence="17">
    <location>
        <begin position="428"/>
        <end position="430"/>
    </location>
</feature>
<feature type="helix" evidence="17">
    <location>
        <begin position="434"/>
        <end position="454"/>
    </location>
</feature>
<feature type="helix" evidence="17">
    <location>
        <begin position="457"/>
        <end position="466"/>
    </location>
</feature>
<feature type="helix" evidence="17">
    <location>
        <begin position="469"/>
        <end position="476"/>
    </location>
</feature>
<feature type="strand" evidence="18">
    <location>
        <begin position="478"/>
        <end position="480"/>
    </location>
</feature>
<feature type="helix" evidence="17">
    <location>
        <begin position="482"/>
        <end position="495"/>
    </location>
</feature>
<reference key="1">
    <citation type="journal article" date="1995" name="EMBO J.">
        <title>In vivo evidence for involvement of a 58 kDa component of nuclear pore-targeting complex in nuclear protein import.</title>
        <authorList>
            <person name="Imamoto N."/>
            <person name="Shimamoto T."/>
            <person name="Takao T."/>
            <person name="Tachibana T."/>
            <person name="Kose S."/>
            <person name="Matsubae M."/>
            <person name="Sekimoto T."/>
            <person name="Shimonishi Y."/>
            <person name="Yoneda Y."/>
        </authorList>
    </citation>
    <scope>NUCLEOTIDE SEQUENCE [MRNA]</scope>
</reference>
<reference key="2">
    <citation type="journal article" date="1995" name="Mol. Gen. Genet.">
        <title>Yeast Srp1, a nuclear protein related to Drosophila and mouse pendulin, is required for normal migration, division, and integrity of nuclei during mitosis.</title>
        <authorList>
            <person name="Kuessel P."/>
            <person name="Frasch M."/>
        </authorList>
    </citation>
    <scope>NUCLEOTIDE SEQUENCE [MRNA]</scope>
    <source>
        <tissue>Embryo</tissue>
    </source>
</reference>
<reference key="3">
    <citation type="journal article" date="1996" name="J. Biol. Chem.">
        <title>The nuclear localization signal of lymphoid enhancer factor-1 is recognized by two differentially expressed Srp1-nuclear localization sequence receptor proteins.</title>
        <authorList>
            <person name="Prieve M.G."/>
            <person name="Guttridge K.L."/>
            <person name="Waterman M.L."/>
        </authorList>
    </citation>
    <scope>NUCLEOTIDE SEQUENCE [MRNA]</scope>
</reference>
<reference key="4">
    <citation type="journal article" date="2004" name="Genome Res.">
        <title>The status, quality, and expansion of the NIH full-length cDNA project: the Mammalian Gene Collection (MGC).</title>
        <authorList>
            <consortium name="The MGC Project Team"/>
        </authorList>
    </citation>
    <scope>NUCLEOTIDE SEQUENCE [LARGE SCALE MRNA]</scope>
</reference>
<reference key="5">
    <citation type="journal article" date="2000" name="FEBS Lett.">
        <title>Characterization of the nuclear transport of a novel leucine-rich acidic nuclear protein-like protein.</title>
        <authorList>
            <person name="Matsubae M."/>
            <person name="Kurihara T."/>
            <person name="Tachibana T."/>
            <person name="Imamoto N."/>
            <person name="Yoneda Y."/>
        </authorList>
    </citation>
    <scope>INTERACTION WITH ANP32E</scope>
</reference>
<reference key="6">
    <citation type="journal article" date="2010" name="Cell">
        <title>A tissue-specific atlas of mouse protein phosphorylation and expression.</title>
        <authorList>
            <person name="Huttlin E.L."/>
            <person name="Jedrychowski M.P."/>
            <person name="Elias J.E."/>
            <person name="Goswami T."/>
            <person name="Rad R."/>
            <person name="Beausoleil S.A."/>
            <person name="Villen J."/>
            <person name="Haas W."/>
            <person name="Sowa M.E."/>
            <person name="Gygi S.P."/>
        </authorList>
    </citation>
    <scope>PHOSPHORYLATION [LARGE SCALE ANALYSIS] AT SER-62</scope>
    <scope>IDENTIFICATION BY MASS SPECTROMETRY [LARGE SCALE ANALYSIS]</scope>
    <source>
        <tissue>Heart</tissue>
        <tissue>Kidney</tissue>
        <tissue>Liver</tissue>
        <tissue>Lung</tissue>
        <tissue>Pancreas</tissue>
        <tissue>Spleen</tissue>
        <tissue>Testis</tissue>
    </source>
</reference>
<reference key="7">
    <citation type="journal article" date="2011" name="J. Biol. Chem.">
        <title>Importin alpha protein acts as a negative regulator for Snail protein nuclear import.</title>
        <authorList>
            <person name="Sekimoto T."/>
            <person name="Miyamoto Y."/>
            <person name="Arai S."/>
            <person name="Yoneda Y."/>
        </authorList>
    </citation>
    <scope>INTERACTS WITH SNAI1</scope>
</reference>
<reference key="8">
    <citation type="journal article" date="2016" name="Free Radic. Biol. Med.">
        <title>Novel role of 4-hydroxy-2-nonenal in AIFm2-mediated mitochondrial stress signaling.</title>
        <authorList>
            <person name="Miriyala S."/>
            <person name="Thippakorn C."/>
            <person name="Chaiswing L."/>
            <person name="Xu Y."/>
            <person name="Noel T."/>
            <person name="Tovmasyan A."/>
            <person name="Batinic-Haberle I."/>
            <person name="Vander Kooi C.W."/>
            <person name="Chi W."/>
            <person name="Latif A.A."/>
            <person name="Panchatcharam M."/>
            <person name="Prachayasittikul V."/>
            <person name="Butterfield D.A."/>
            <person name="Vore M."/>
            <person name="Moscow J."/>
            <person name="St Clair D.K."/>
        </authorList>
    </citation>
    <scope>INTERACTION WITH AIFM2</scope>
</reference>
<reference key="9">
    <citation type="journal article" date="2000" name="J. Mol. Biol.">
        <title>Structural basis of recognition of monopartite and bipartite nuclear localization sequences by mammalian importin-alpha.</title>
        <authorList>
            <person name="Fontes M.R."/>
            <person name="Teh T."/>
            <person name="Kobe B."/>
        </authorList>
    </citation>
    <scope>X-RAY CRYSTALLOGRAPHY (2.8 ANGSTROMS) OF 72-497</scope>
    <scope>NUCLEAR LOCALIZATION SIGNAL RECOGNITION</scope>
</reference>
<reference key="10">
    <citation type="journal article" date="1999" name="Nat. Struct. Biol.">
        <title>Autoinhibition by an internal nuclear localization signal revealed by the crystal structure of mammalian importin alpha.</title>
        <authorList>
            <person name="Kobe B."/>
        </authorList>
    </citation>
    <scope>X-RAY CRYSTALLOGRAPHY (2.5 ANGSTROMS) OF 44-496</scope>
    <scope>NUCLEAR LOCALIZATION SIGNAL</scope>
    <scope>AUTOINHIBITION</scope>
</reference>
<reference key="11">
    <citation type="journal article" date="2001" name="J. Biol. Chem.">
        <title>Biophysical characterization of interactions involving importin-alpha during nuclear import.</title>
        <authorList>
            <person name="Catimel B."/>
            <person name="Teh T."/>
            <person name="Fontes M.R."/>
            <person name="Jennings I.G."/>
            <person name="Jans D.A."/>
            <person name="Howlett G.J."/>
            <person name="Nice E.C."/>
            <person name="Kobe B."/>
        </authorList>
    </citation>
    <scope>X-RAY CRYSTALLOGRAPHY (2.8 ANGSTROMS) OF 47-54</scope>
    <scope>AUTOINHIBITION</scope>
</reference>
<reference key="12">
    <citation type="journal article" date="2005" name="EMBO J.">
        <title>Nup50/Npap60 function in nuclear protein import complex disassembly and importin recycling.</title>
        <authorList>
            <person name="Matsuura Y."/>
            <person name="Stewart M."/>
        </authorList>
    </citation>
    <scope>X-RAY CRYSTALLOGRAPHY (2.2 ANGSTROMS) OF 75-498 IN COMPLEX WITH NUP50</scope>
</reference>
<reference evidence="12" key="13">
    <citation type="journal article" date="2011" name="J. Biol. Chem.">
        <title>A minimal nuclear localization signal (NLS) in human phospholipid scramblase 4 that binds only the minor NLS-binding site of importin alpha1.</title>
        <authorList>
            <person name="Lott K."/>
            <person name="Bhardwaj A."/>
            <person name="Sims P.J."/>
            <person name="Cingolani G."/>
        </authorList>
    </citation>
    <scope>X-RAY CRYSTALLOGRAPHY (2.50 ANGSTROMS) OF 271-283 IN COMPLEX WITH PLSCR4</scope>
    <scope>FUNCTION</scope>
</reference>